<reference key="1">
    <citation type="submission" date="2008-02" db="EMBL/GenBank/DDBJ databases">
        <title>Complete sequence of Haemophilus somnus 2336.</title>
        <authorList>
            <consortium name="US DOE Joint Genome Institute"/>
            <person name="Siddaramappa S."/>
            <person name="Duncan A.J."/>
            <person name="Challacombe J.F."/>
            <person name="Rainey D."/>
            <person name="Gillaspy A.F."/>
            <person name="Carson M."/>
            <person name="Gipson J."/>
            <person name="Gipson M."/>
            <person name="Bruce D."/>
            <person name="Detter J.C."/>
            <person name="Han C.S."/>
            <person name="Land M."/>
            <person name="Tapia R."/>
            <person name="Thompson L.S."/>
            <person name="Orvis J."/>
            <person name="Zaitshik J."/>
            <person name="Barnes G."/>
            <person name="Brettin T.S."/>
            <person name="Dyer D.W."/>
            <person name="Inzana T.J."/>
        </authorList>
    </citation>
    <scope>NUCLEOTIDE SEQUENCE [LARGE SCALE GENOMIC DNA]</scope>
    <source>
        <strain>2336</strain>
    </source>
</reference>
<dbReference type="EMBL" id="CP000947">
    <property type="protein sequence ID" value="ACA30776.1"/>
    <property type="molecule type" value="Genomic_DNA"/>
</dbReference>
<dbReference type="RefSeq" id="WP_012340249.1">
    <property type="nucleotide sequence ID" value="NC_010519.1"/>
</dbReference>
<dbReference type="SMR" id="B0UTE2"/>
<dbReference type="STRING" id="228400.HSM_1061"/>
<dbReference type="GeneID" id="31487361"/>
<dbReference type="KEGG" id="hsm:HSM_1061"/>
<dbReference type="HOGENOM" id="CLU_164837_2_1_6"/>
<dbReference type="GO" id="GO:0005829">
    <property type="term" value="C:cytosol"/>
    <property type="evidence" value="ECO:0007669"/>
    <property type="project" value="TreeGrafter"/>
</dbReference>
<dbReference type="GO" id="GO:0048027">
    <property type="term" value="F:mRNA 5'-UTR binding"/>
    <property type="evidence" value="ECO:0007669"/>
    <property type="project" value="UniProtKB-UniRule"/>
</dbReference>
<dbReference type="GO" id="GO:0006402">
    <property type="term" value="P:mRNA catabolic process"/>
    <property type="evidence" value="ECO:0007669"/>
    <property type="project" value="InterPro"/>
</dbReference>
<dbReference type="GO" id="GO:0045947">
    <property type="term" value="P:negative regulation of translational initiation"/>
    <property type="evidence" value="ECO:0007669"/>
    <property type="project" value="UniProtKB-UniRule"/>
</dbReference>
<dbReference type="GO" id="GO:0045948">
    <property type="term" value="P:positive regulation of translational initiation"/>
    <property type="evidence" value="ECO:0007669"/>
    <property type="project" value="UniProtKB-UniRule"/>
</dbReference>
<dbReference type="GO" id="GO:0006109">
    <property type="term" value="P:regulation of carbohydrate metabolic process"/>
    <property type="evidence" value="ECO:0007669"/>
    <property type="project" value="UniProtKB-UniRule"/>
</dbReference>
<dbReference type="FunFam" id="2.60.40.4380:FF:000001">
    <property type="entry name" value="Translational regulator CsrA"/>
    <property type="match status" value="1"/>
</dbReference>
<dbReference type="Gene3D" id="2.60.40.4380">
    <property type="entry name" value="Translational regulator CsrA"/>
    <property type="match status" value="1"/>
</dbReference>
<dbReference type="HAMAP" id="MF_00167">
    <property type="entry name" value="CsrA"/>
    <property type="match status" value="1"/>
</dbReference>
<dbReference type="InterPro" id="IPR003751">
    <property type="entry name" value="CsrA"/>
</dbReference>
<dbReference type="InterPro" id="IPR036107">
    <property type="entry name" value="CsrA_sf"/>
</dbReference>
<dbReference type="NCBIfam" id="TIGR00202">
    <property type="entry name" value="csrA"/>
    <property type="match status" value="1"/>
</dbReference>
<dbReference type="NCBIfam" id="NF002469">
    <property type="entry name" value="PRK01712.1"/>
    <property type="match status" value="1"/>
</dbReference>
<dbReference type="PANTHER" id="PTHR34984">
    <property type="entry name" value="CARBON STORAGE REGULATOR"/>
    <property type="match status" value="1"/>
</dbReference>
<dbReference type="PANTHER" id="PTHR34984:SF1">
    <property type="entry name" value="CARBON STORAGE REGULATOR"/>
    <property type="match status" value="1"/>
</dbReference>
<dbReference type="Pfam" id="PF02599">
    <property type="entry name" value="CsrA"/>
    <property type="match status" value="1"/>
</dbReference>
<dbReference type="SUPFAM" id="SSF117130">
    <property type="entry name" value="CsrA-like"/>
    <property type="match status" value="1"/>
</dbReference>
<accession>B0UTE2</accession>
<feature type="chain" id="PRO_1000076993" description="Translational regulator CsrA">
    <location>
        <begin position="1"/>
        <end position="60"/>
    </location>
</feature>
<name>CSRA_HISS2</name>
<evidence type="ECO:0000255" key="1">
    <source>
        <dbReference type="HAMAP-Rule" id="MF_00167"/>
    </source>
</evidence>
<protein>
    <recommendedName>
        <fullName evidence="1">Translational regulator CsrA</fullName>
    </recommendedName>
    <alternativeName>
        <fullName evidence="1">Carbon storage regulator</fullName>
    </alternativeName>
</protein>
<sequence length="60" mass="6880">MLILTRKVGESLLIGDDISITILNIRGNQVKIGVEAPKEVSVHREEIYHRIRDVKDEQQL</sequence>
<keyword id="KW-0010">Activator</keyword>
<keyword id="KW-0963">Cytoplasm</keyword>
<keyword id="KW-0678">Repressor</keyword>
<keyword id="KW-0694">RNA-binding</keyword>
<keyword id="KW-0810">Translation regulation</keyword>
<proteinExistence type="inferred from homology"/>
<organism>
    <name type="scientific">Histophilus somni (strain 2336)</name>
    <name type="common">Haemophilus somnus</name>
    <dbReference type="NCBI Taxonomy" id="228400"/>
    <lineage>
        <taxon>Bacteria</taxon>
        <taxon>Pseudomonadati</taxon>
        <taxon>Pseudomonadota</taxon>
        <taxon>Gammaproteobacteria</taxon>
        <taxon>Pasteurellales</taxon>
        <taxon>Pasteurellaceae</taxon>
        <taxon>Histophilus</taxon>
    </lineage>
</organism>
<gene>
    <name evidence="1" type="primary">csrA</name>
    <name type="ordered locus">HSM_1061</name>
</gene>
<comment type="function">
    <text evidence="1">A key translational regulator that binds mRNA to regulate translation initiation and/or mRNA stability. Mediates global changes in gene expression, shifting from rapid growth to stress survival by linking envelope stress, the stringent response and the catabolite repression systems. Usually binds in the 5'-UTR; binding at or near the Shine-Dalgarno sequence prevents ribosome-binding, repressing translation, binding elsewhere in the 5'-UTR can activate translation and/or stabilize the mRNA. Its function is antagonized by small RNA(s).</text>
</comment>
<comment type="subunit">
    <text evidence="1">Homodimer; the beta-strands of each monomer intercalate to form a hydrophobic core, while the alpha-helices form wings that extend away from the core.</text>
</comment>
<comment type="subcellular location">
    <subcellularLocation>
        <location evidence="1">Cytoplasm</location>
    </subcellularLocation>
</comment>
<comment type="similarity">
    <text evidence="1">Belongs to the CsrA/RsmA family.</text>
</comment>